<sequence length="252" mass="27281">MKTVTVRDLVVGEGAPKIIVSLMGKTITDVKSEALAYREADFDILEWRVDHFANVTTAESVLEAAGAIREIITDKPLLFTFRSAKEGGEQALTTGQYIALNRAAVDSGLVDMIDLELFTGDDEVKATVGYAHQHNVAVIMSNHDFHKTPAAEEIVQRLRKMQELGADIPKIAVMPQTKADVLTLLTATVEMQERYADRPIITMSMSKTGVISRLAGEVFGSAATFGAVKKASAPGQISVADLRTVLTILHQA</sequence>
<organism>
    <name type="scientific">Salmonella paratyphi B (strain ATCC BAA-1250 / SPB7)</name>
    <dbReference type="NCBI Taxonomy" id="1016998"/>
    <lineage>
        <taxon>Bacteria</taxon>
        <taxon>Pseudomonadati</taxon>
        <taxon>Pseudomonadota</taxon>
        <taxon>Gammaproteobacteria</taxon>
        <taxon>Enterobacterales</taxon>
        <taxon>Enterobacteriaceae</taxon>
        <taxon>Salmonella</taxon>
    </lineage>
</organism>
<name>AROD_SALPB</name>
<feature type="chain" id="PRO_1000078047" description="3-dehydroquinate dehydratase">
    <location>
        <begin position="1"/>
        <end position="252"/>
    </location>
</feature>
<feature type="active site" description="Proton donor/acceptor" evidence="1">
    <location>
        <position position="143"/>
    </location>
</feature>
<feature type="active site" description="Schiff-base intermediate with substrate" evidence="1">
    <location>
        <position position="170"/>
    </location>
</feature>
<feature type="binding site" evidence="1">
    <location>
        <position position="21"/>
    </location>
    <ligand>
        <name>3-dehydroquinate</name>
        <dbReference type="ChEBI" id="CHEBI:32364"/>
    </ligand>
</feature>
<feature type="binding site" evidence="1">
    <location>
        <begin position="46"/>
        <end position="48"/>
    </location>
    <ligand>
        <name>3-dehydroquinate</name>
        <dbReference type="ChEBI" id="CHEBI:32364"/>
    </ligand>
</feature>
<feature type="binding site" evidence="1">
    <location>
        <position position="82"/>
    </location>
    <ligand>
        <name>3-dehydroquinate</name>
        <dbReference type="ChEBI" id="CHEBI:32364"/>
    </ligand>
</feature>
<feature type="binding site" evidence="1">
    <location>
        <position position="213"/>
    </location>
    <ligand>
        <name>3-dehydroquinate</name>
        <dbReference type="ChEBI" id="CHEBI:32364"/>
    </ligand>
</feature>
<feature type="binding site" evidence="1">
    <location>
        <position position="232"/>
    </location>
    <ligand>
        <name>3-dehydroquinate</name>
        <dbReference type="ChEBI" id="CHEBI:32364"/>
    </ligand>
</feature>
<feature type="binding site" evidence="1">
    <location>
        <position position="236"/>
    </location>
    <ligand>
        <name>3-dehydroquinate</name>
        <dbReference type="ChEBI" id="CHEBI:32364"/>
    </ligand>
</feature>
<proteinExistence type="inferred from homology"/>
<keyword id="KW-0028">Amino-acid biosynthesis</keyword>
<keyword id="KW-0057">Aromatic amino acid biosynthesis</keyword>
<keyword id="KW-0456">Lyase</keyword>
<keyword id="KW-0704">Schiff base</keyword>
<comment type="function">
    <text evidence="1">Involved in the third step of the chorismate pathway, which leads to the biosynthesis of aromatic amino acids. Catalyzes the cis-dehydration of 3-dehydroquinate (DHQ) and introduces the first double bond of the aromatic ring to yield 3-dehydroshikimate.</text>
</comment>
<comment type="catalytic activity">
    <reaction evidence="1">
        <text>3-dehydroquinate = 3-dehydroshikimate + H2O</text>
        <dbReference type="Rhea" id="RHEA:21096"/>
        <dbReference type="ChEBI" id="CHEBI:15377"/>
        <dbReference type="ChEBI" id="CHEBI:16630"/>
        <dbReference type="ChEBI" id="CHEBI:32364"/>
        <dbReference type="EC" id="4.2.1.10"/>
    </reaction>
</comment>
<comment type="pathway">
    <text evidence="1">Metabolic intermediate biosynthesis; chorismate biosynthesis; chorismate from D-erythrose 4-phosphate and phosphoenolpyruvate: step 3/7.</text>
</comment>
<comment type="subunit">
    <text evidence="1">Homodimer.</text>
</comment>
<comment type="similarity">
    <text evidence="1">Belongs to the type-I 3-dehydroquinase family.</text>
</comment>
<accession>A9N159</accession>
<reference key="1">
    <citation type="submission" date="2007-11" db="EMBL/GenBank/DDBJ databases">
        <authorList>
            <consortium name="The Salmonella enterica serovar Paratyphi B Genome Sequencing Project"/>
            <person name="McClelland M."/>
            <person name="Sanderson E.K."/>
            <person name="Porwollik S."/>
            <person name="Spieth J."/>
            <person name="Clifton W.S."/>
            <person name="Fulton R."/>
            <person name="Cordes M."/>
            <person name="Wollam A."/>
            <person name="Shah N."/>
            <person name="Pepin K."/>
            <person name="Bhonagiri V."/>
            <person name="Nash W."/>
            <person name="Johnson M."/>
            <person name="Thiruvilangam P."/>
            <person name="Wilson R."/>
        </authorList>
    </citation>
    <scope>NUCLEOTIDE SEQUENCE [LARGE SCALE GENOMIC DNA]</scope>
    <source>
        <strain>ATCC BAA-1250 / SPB7</strain>
    </source>
</reference>
<dbReference type="EC" id="4.2.1.10" evidence="1"/>
<dbReference type="EMBL" id="CP000886">
    <property type="protein sequence ID" value="ABX67362.1"/>
    <property type="molecule type" value="Genomic_DNA"/>
</dbReference>
<dbReference type="RefSeq" id="WP_000860224.1">
    <property type="nucleotide sequence ID" value="NC_010102.1"/>
</dbReference>
<dbReference type="SMR" id="A9N159"/>
<dbReference type="KEGG" id="spq:SPAB_01975"/>
<dbReference type="PATRIC" id="fig|1016998.12.peg.1863"/>
<dbReference type="HOGENOM" id="CLU_064444_0_0_6"/>
<dbReference type="BioCyc" id="SENT1016998:SPAB_RS08055-MONOMER"/>
<dbReference type="UniPathway" id="UPA00053">
    <property type="reaction ID" value="UER00086"/>
</dbReference>
<dbReference type="Proteomes" id="UP000008556">
    <property type="component" value="Chromosome"/>
</dbReference>
<dbReference type="GO" id="GO:0003855">
    <property type="term" value="F:3-dehydroquinate dehydratase activity"/>
    <property type="evidence" value="ECO:0007669"/>
    <property type="project" value="UniProtKB-UniRule"/>
</dbReference>
<dbReference type="GO" id="GO:0046279">
    <property type="term" value="P:3,4-dihydroxybenzoate biosynthetic process"/>
    <property type="evidence" value="ECO:0007669"/>
    <property type="project" value="UniProtKB-ARBA"/>
</dbReference>
<dbReference type="GO" id="GO:0008652">
    <property type="term" value="P:amino acid biosynthetic process"/>
    <property type="evidence" value="ECO:0007669"/>
    <property type="project" value="UniProtKB-KW"/>
</dbReference>
<dbReference type="GO" id="GO:0009073">
    <property type="term" value="P:aromatic amino acid family biosynthetic process"/>
    <property type="evidence" value="ECO:0007669"/>
    <property type="project" value="UniProtKB-KW"/>
</dbReference>
<dbReference type="GO" id="GO:0009423">
    <property type="term" value="P:chorismate biosynthetic process"/>
    <property type="evidence" value="ECO:0007669"/>
    <property type="project" value="UniProtKB-UniRule"/>
</dbReference>
<dbReference type="CDD" id="cd00502">
    <property type="entry name" value="DHQase_I"/>
    <property type="match status" value="1"/>
</dbReference>
<dbReference type="FunFam" id="3.20.20.70:FF:000047">
    <property type="entry name" value="3-dehydroquinate dehydratase"/>
    <property type="match status" value="1"/>
</dbReference>
<dbReference type="Gene3D" id="3.20.20.70">
    <property type="entry name" value="Aldolase class I"/>
    <property type="match status" value="1"/>
</dbReference>
<dbReference type="HAMAP" id="MF_00214">
    <property type="entry name" value="AroD"/>
    <property type="match status" value="1"/>
</dbReference>
<dbReference type="InterPro" id="IPR018508">
    <property type="entry name" value="3-dehydroquinate_DH_AS"/>
</dbReference>
<dbReference type="InterPro" id="IPR013785">
    <property type="entry name" value="Aldolase_TIM"/>
</dbReference>
<dbReference type="InterPro" id="IPR001381">
    <property type="entry name" value="DHquinase_I"/>
</dbReference>
<dbReference type="InterPro" id="IPR050146">
    <property type="entry name" value="Type-I_3-dehydroquinase"/>
</dbReference>
<dbReference type="NCBIfam" id="TIGR01093">
    <property type="entry name" value="aroD"/>
    <property type="match status" value="1"/>
</dbReference>
<dbReference type="PANTHER" id="PTHR43699">
    <property type="entry name" value="3-DEHYDROQUINATE DEHYDRATASE"/>
    <property type="match status" value="1"/>
</dbReference>
<dbReference type="PANTHER" id="PTHR43699:SF1">
    <property type="entry name" value="3-DEHYDROQUINATE DEHYDRATASE"/>
    <property type="match status" value="1"/>
</dbReference>
<dbReference type="Pfam" id="PF01487">
    <property type="entry name" value="DHquinase_I"/>
    <property type="match status" value="1"/>
</dbReference>
<dbReference type="SUPFAM" id="SSF51569">
    <property type="entry name" value="Aldolase"/>
    <property type="match status" value="1"/>
</dbReference>
<dbReference type="PROSITE" id="PS01028">
    <property type="entry name" value="DEHYDROQUINASE_I"/>
    <property type="match status" value="1"/>
</dbReference>
<gene>
    <name evidence="1" type="primary">aroD</name>
    <name type="ordered locus">SPAB_01975</name>
</gene>
<evidence type="ECO:0000255" key="1">
    <source>
        <dbReference type="HAMAP-Rule" id="MF_00214"/>
    </source>
</evidence>
<protein>
    <recommendedName>
        <fullName evidence="1">3-dehydroquinate dehydratase</fullName>
        <shortName evidence="1">3-dehydroquinase</shortName>
        <ecNumber evidence="1">4.2.1.10</ecNumber>
    </recommendedName>
    <alternativeName>
        <fullName evidence="1">Type I DHQase</fullName>
    </alternativeName>
    <alternativeName>
        <fullName evidence="1">Type I dehydroquinase</fullName>
        <shortName evidence="1">DHQ1</shortName>
    </alternativeName>
</protein>